<sequence length="882" mass="101059">MKKQIGDRYEPKDVENKWISLWEKKKSFAPNSNARESFSIVIPPPNVTGSLHIGHALNHTIQDILVRIERKKGKSTLWLPGMDHAGIATQMVVERELAKESKKRTDFTREEFIHKVWEWKNHSGGMITKQQKLLGESVDWSRERFTLDEGLSKAVFKVFKSLYDEGLIYRGERIINWCPASQTAISDLEVEFRETKGKLYHIKYPIHGKKDQFLVVATTRPETMLGDVAVCANPEDERYTSLKDVVLDLPLTNRQIPLLFDSFVDKEFGSGLVKITPAHDANDFEAGQRLGLKPLLVMNPNGTMNENAGIYQGLDRFEARKKVLADLEAKGLIEKIEDHIHAVGHNSRGGAVIEPYLSTQWFVKIKPLADLAVQAVQSGQVEFIPKMWEKTFFEWMNNIRDWCISRQLWWGHRIPAYHCKKCKHFEVSETAVTVCTSCGSQEVEPDPDVLDTWFSSQLWPFSTLGWPDQTEDLKRYYPTSVLVTGFDIIFFWVSRMIMMGMKFMQAPPFHKVLIHGLVRDKDGKKFSKSVGNVIDPLVMMDKYGTDSFRFFLAATLPEGKDILFDESRLDGYRSFCNKIWNSSRFILMNLEESFVPIGITPDIEKDLEPMDQWILSRFNHCLEEYNKAHSKFHFYEMAAAIYEFIWGDFCDWYIELVKPRAYGKVSPRSAEVAKQVLSDVLIRALGLLHPFMPFLTEEVHSVFSDQYIVTTPFPESYPVASDSLGVQKLNLLQEIVTKIRVMRSENGVAPDRKCKAIVKSSDNLSSSTILENEVSLLQLARLESIRIDTLYEIQKTDSVSHFTKGEIVLPLEGLIDVAKEKTRLEKELQKSELEKEKLEIKLSNPGFLSKAAPEVVEKERDKLKTLIDKVEVLKKGIQNLAG</sequence>
<comment type="function">
    <text evidence="1">Catalyzes the attachment of valine to tRNA(Val). As ValRS can inadvertently accommodate and process structurally similar amino acids such as threonine, to avoid such errors, it has a 'posttransfer' editing activity that hydrolyzes mischarged Thr-tRNA(Val) in a tRNA-dependent manner.</text>
</comment>
<comment type="catalytic activity">
    <reaction evidence="1">
        <text>tRNA(Val) + L-valine + ATP = L-valyl-tRNA(Val) + AMP + diphosphate</text>
        <dbReference type="Rhea" id="RHEA:10704"/>
        <dbReference type="Rhea" id="RHEA-COMP:9672"/>
        <dbReference type="Rhea" id="RHEA-COMP:9708"/>
        <dbReference type="ChEBI" id="CHEBI:30616"/>
        <dbReference type="ChEBI" id="CHEBI:33019"/>
        <dbReference type="ChEBI" id="CHEBI:57762"/>
        <dbReference type="ChEBI" id="CHEBI:78442"/>
        <dbReference type="ChEBI" id="CHEBI:78537"/>
        <dbReference type="ChEBI" id="CHEBI:456215"/>
        <dbReference type="EC" id="6.1.1.9"/>
    </reaction>
</comment>
<comment type="subunit">
    <text evidence="1">Monomer.</text>
</comment>
<comment type="subcellular location">
    <subcellularLocation>
        <location evidence="1">Cytoplasm</location>
    </subcellularLocation>
</comment>
<comment type="domain">
    <text evidence="1">ValRS has two distinct active sites: one for aminoacylation and one for editing. The misactivated threonine is translocated from the active site to the editing site.</text>
</comment>
<comment type="domain">
    <text evidence="1">The C-terminal coiled-coil domain is crucial for aminoacylation activity.</text>
</comment>
<comment type="similarity">
    <text evidence="1">Belongs to the class-I aminoacyl-tRNA synthetase family. ValS type 1 subfamily.</text>
</comment>
<protein>
    <recommendedName>
        <fullName evidence="1">Valine--tRNA ligase</fullName>
        <ecNumber evidence="1">6.1.1.9</ecNumber>
    </recommendedName>
    <alternativeName>
        <fullName evidence="1">Valyl-tRNA synthetase</fullName>
        <shortName evidence="1">ValRS</shortName>
    </alternativeName>
</protein>
<name>SYV_LEPIN</name>
<dbReference type="EC" id="6.1.1.9" evidence="1"/>
<dbReference type="EMBL" id="AE010300">
    <property type="protein sequence ID" value="AAN50961.2"/>
    <property type="molecule type" value="Genomic_DNA"/>
</dbReference>
<dbReference type="RefSeq" id="NP_713943.2">
    <property type="nucleotide sequence ID" value="NC_004342.2"/>
</dbReference>
<dbReference type="RefSeq" id="WP_000744010.1">
    <property type="nucleotide sequence ID" value="NC_004342.2"/>
</dbReference>
<dbReference type="SMR" id="Q8EZT8"/>
<dbReference type="FunCoup" id="Q8EZT8">
    <property type="interactions" value="476"/>
</dbReference>
<dbReference type="STRING" id="189518.LA_3763"/>
<dbReference type="PaxDb" id="189518-LA_3763"/>
<dbReference type="EnsemblBacteria" id="AAN50961">
    <property type="protein sequence ID" value="AAN50961"/>
    <property type="gene ID" value="LA_3763"/>
</dbReference>
<dbReference type="KEGG" id="lil:LA_3763"/>
<dbReference type="PATRIC" id="fig|189518.3.peg.3736"/>
<dbReference type="HOGENOM" id="CLU_001493_0_2_12"/>
<dbReference type="InParanoid" id="Q8EZT8"/>
<dbReference type="OrthoDB" id="9810365at2"/>
<dbReference type="Proteomes" id="UP000001408">
    <property type="component" value="Chromosome I"/>
</dbReference>
<dbReference type="GO" id="GO:0005829">
    <property type="term" value="C:cytosol"/>
    <property type="evidence" value="ECO:0000318"/>
    <property type="project" value="GO_Central"/>
</dbReference>
<dbReference type="GO" id="GO:0002161">
    <property type="term" value="F:aminoacyl-tRNA deacylase activity"/>
    <property type="evidence" value="ECO:0007669"/>
    <property type="project" value="InterPro"/>
</dbReference>
<dbReference type="GO" id="GO:0005524">
    <property type="term" value="F:ATP binding"/>
    <property type="evidence" value="ECO:0007669"/>
    <property type="project" value="UniProtKB-UniRule"/>
</dbReference>
<dbReference type="GO" id="GO:0004832">
    <property type="term" value="F:valine-tRNA ligase activity"/>
    <property type="evidence" value="ECO:0000318"/>
    <property type="project" value="GO_Central"/>
</dbReference>
<dbReference type="GO" id="GO:0006438">
    <property type="term" value="P:valyl-tRNA aminoacylation"/>
    <property type="evidence" value="ECO:0000318"/>
    <property type="project" value="GO_Central"/>
</dbReference>
<dbReference type="CDD" id="cd07962">
    <property type="entry name" value="Anticodon_Ia_Val"/>
    <property type="match status" value="1"/>
</dbReference>
<dbReference type="CDD" id="cd00817">
    <property type="entry name" value="ValRS_core"/>
    <property type="match status" value="1"/>
</dbReference>
<dbReference type="FunFam" id="1.10.287.380:FF:000001">
    <property type="entry name" value="Valine--tRNA ligase"/>
    <property type="match status" value="1"/>
</dbReference>
<dbReference type="FunFam" id="3.40.50.620:FF:000098">
    <property type="entry name" value="Valine--tRNA ligase"/>
    <property type="match status" value="1"/>
</dbReference>
<dbReference type="FunFam" id="3.40.50.620:FF:000020">
    <property type="entry name" value="Valine--tRNA ligase, mitochondrial"/>
    <property type="match status" value="1"/>
</dbReference>
<dbReference type="Gene3D" id="3.40.50.620">
    <property type="entry name" value="HUPs"/>
    <property type="match status" value="2"/>
</dbReference>
<dbReference type="Gene3D" id="1.10.730.10">
    <property type="entry name" value="Isoleucyl-tRNA Synthetase, Domain 1"/>
    <property type="match status" value="1"/>
</dbReference>
<dbReference type="Gene3D" id="1.10.287.380">
    <property type="entry name" value="Valyl-tRNA synthetase, C-terminal domain"/>
    <property type="match status" value="1"/>
</dbReference>
<dbReference type="HAMAP" id="MF_02004">
    <property type="entry name" value="Val_tRNA_synth_type1"/>
    <property type="match status" value="1"/>
</dbReference>
<dbReference type="InterPro" id="IPR001412">
    <property type="entry name" value="aa-tRNA-synth_I_CS"/>
</dbReference>
<dbReference type="InterPro" id="IPR002300">
    <property type="entry name" value="aa-tRNA-synth_Ia"/>
</dbReference>
<dbReference type="InterPro" id="IPR033705">
    <property type="entry name" value="Anticodon_Ia_Val"/>
</dbReference>
<dbReference type="InterPro" id="IPR013155">
    <property type="entry name" value="M/V/L/I-tRNA-synth_anticd-bd"/>
</dbReference>
<dbReference type="InterPro" id="IPR014729">
    <property type="entry name" value="Rossmann-like_a/b/a_fold"/>
</dbReference>
<dbReference type="InterPro" id="IPR010978">
    <property type="entry name" value="tRNA-bd_arm"/>
</dbReference>
<dbReference type="InterPro" id="IPR009080">
    <property type="entry name" value="tRNAsynth_Ia_anticodon-bd"/>
</dbReference>
<dbReference type="InterPro" id="IPR037118">
    <property type="entry name" value="Val-tRNA_synth_C_sf"/>
</dbReference>
<dbReference type="InterPro" id="IPR019499">
    <property type="entry name" value="Val-tRNA_synth_tRNA-bd"/>
</dbReference>
<dbReference type="InterPro" id="IPR009008">
    <property type="entry name" value="Val/Leu/Ile-tRNA-synth_edit"/>
</dbReference>
<dbReference type="InterPro" id="IPR002303">
    <property type="entry name" value="Valyl-tRNA_ligase"/>
</dbReference>
<dbReference type="NCBIfam" id="NF004349">
    <property type="entry name" value="PRK05729.1"/>
    <property type="match status" value="1"/>
</dbReference>
<dbReference type="NCBIfam" id="TIGR00422">
    <property type="entry name" value="valS"/>
    <property type="match status" value="1"/>
</dbReference>
<dbReference type="PANTHER" id="PTHR11946:SF93">
    <property type="entry name" value="VALINE--TRNA LIGASE, CHLOROPLASTIC_MITOCHONDRIAL 2"/>
    <property type="match status" value="1"/>
</dbReference>
<dbReference type="PANTHER" id="PTHR11946">
    <property type="entry name" value="VALYL-TRNA SYNTHETASES"/>
    <property type="match status" value="1"/>
</dbReference>
<dbReference type="Pfam" id="PF08264">
    <property type="entry name" value="Anticodon_1"/>
    <property type="match status" value="1"/>
</dbReference>
<dbReference type="Pfam" id="PF00133">
    <property type="entry name" value="tRNA-synt_1"/>
    <property type="match status" value="1"/>
</dbReference>
<dbReference type="Pfam" id="PF10458">
    <property type="entry name" value="Val_tRNA-synt_C"/>
    <property type="match status" value="1"/>
</dbReference>
<dbReference type="PRINTS" id="PR00986">
    <property type="entry name" value="TRNASYNTHVAL"/>
</dbReference>
<dbReference type="SUPFAM" id="SSF47323">
    <property type="entry name" value="Anticodon-binding domain of a subclass of class I aminoacyl-tRNA synthetases"/>
    <property type="match status" value="1"/>
</dbReference>
<dbReference type="SUPFAM" id="SSF52374">
    <property type="entry name" value="Nucleotidylyl transferase"/>
    <property type="match status" value="1"/>
</dbReference>
<dbReference type="SUPFAM" id="SSF46589">
    <property type="entry name" value="tRNA-binding arm"/>
    <property type="match status" value="1"/>
</dbReference>
<dbReference type="SUPFAM" id="SSF50677">
    <property type="entry name" value="ValRS/IleRS/LeuRS editing domain"/>
    <property type="match status" value="1"/>
</dbReference>
<dbReference type="PROSITE" id="PS00178">
    <property type="entry name" value="AA_TRNA_LIGASE_I"/>
    <property type="match status" value="1"/>
</dbReference>
<organism>
    <name type="scientific">Leptospira interrogans serogroup Icterohaemorrhagiae serovar Lai (strain 56601)</name>
    <dbReference type="NCBI Taxonomy" id="189518"/>
    <lineage>
        <taxon>Bacteria</taxon>
        <taxon>Pseudomonadati</taxon>
        <taxon>Spirochaetota</taxon>
        <taxon>Spirochaetia</taxon>
        <taxon>Leptospirales</taxon>
        <taxon>Leptospiraceae</taxon>
        <taxon>Leptospira</taxon>
    </lineage>
</organism>
<keyword id="KW-0030">Aminoacyl-tRNA synthetase</keyword>
<keyword id="KW-0067">ATP-binding</keyword>
<keyword id="KW-0175">Coiled coil</keyword>
<keyword id="KW-0963">Cytoplasm</keyword>
<keyword id="KW-0436">Ligase</keyword>
<keyword id="KW-0547">Nucleotide-binding</keyword>
<keyword id="KW-0648">Protein biosynthesis</keyword>
<keyword id="KW-1185">Reference proteome</keyword>
<reference key="1">
    <citation type="journal article" date="2003" name="Nature">
        <title>Unique physiological and pathogenic features of Leptospira interrogans revealed by whole-genome sequencing.</title>
        <authorList>
            <person name="Ren S.-X."/>
            <person name="Fu G."/>
            <person name="Jiang X.-G."/>
            <person name="Zeng R."/>
            <person name="Miao Y.-G."/>
            <person name="Xu H."/>
            <person name="Zhang Y.-X."/>
            <person name="Xiong H."/>
            <person name="Lu G."/>
            <person name="Lu L.-F."/>
            <person name="Jiang H.-Q."/>
            <person name="Jia J."/>
            <person name="Tu Y.-F."/>
            <person name="Jiang J.-X."/>
            <person name="Gu W.-Y."/>
            <person name="Zhang Y.-Q."/>
            <person name="Cai Z."/>
            <person name="Sheng H.-H."/>
            <person name="Yin H.-F."/>
            <person name="Zhang Y."/>
            <person name="Zhu G.-F."/>
            <person name="Wan M."/>
            <person name="Huang H.-L."/>
            <person name="Qian Z."/>
            <person name="Wang S.-Y."/>
            <person name="Ma W."/>
            <person name="Yao Z.-J."/>
            <person name="Shen Y."/>
            <person name="Qiang B.-Q."/>
            <person name="Xia Q.-C."/>
            <person name="Guo X.-K."/>
            <person name="Danchin A."/>
            <person name="Saint Girons I."/>
            <person name="Somerville R.L."/>
            <person name="Wen Y.-M."/>
            <person name="Shi M.-H."/>
            <person name="Chen Z."/>
            <person name="Xu J.-G."/>
            <person name="Zhao G.-P."/>
        </authorList>
    </citation>
    <scope>NUCLEOTIDE SEQUENCE [LARGE SCALE GENOMIC DNA]</scope>
    <source>
        <strain>56601</strain>
    </source>
</reference>
<evidence type="ECO:0000255" key="1">
    <source>
        <dbReference type="HAMAP-Rule" id="MF_02004"/>
    </source>
</evidence>
<proteinExistence type="inferred from homology"/>
<accession>Q8EZT8</accession>
<feature type="chain" id="PRO_0000224497" description="Valine--tRNA ligase">
    <location>
        <begin position="1"/>
        <end position="882"/>
    </location>
</feature>
<feature type="coiled-coil region" evidence="1">
    <location>
        <begin position="812"/>
        <end position="881"/>
    </location>
</feature>
<feature type="short sequence motif" description="'HIGH' region">
    <location>
        <begin position="45"/>
        <end position="55"/>
    </location>
</feature>
<feature type="short sequence motif" description="'KMSKS' region">
    <location>
        <begin position="525"/>
        <end position="529"/>
    </location>
</feature>
<feature type="binding site" evidence="1">
    <location>
        <position position="528"/>
    </location>
    <ligand>
        <name>ATP</name>
        <dbReference type="ChEBI" id="CHEBI:30616"/>
    </ligand>
</feature>
<gene>
    <name evidence="1" type="primary">valS</name>
    <name type="ordered locus">LA_3763</name>
</gene>